<name>RS12_CLOPE</name>
<proteinExistence type="inferred from homology"/>
<sequence length="126" mass="13741">MPTISQLVRKGRKTVASKSTAPALKECPQKRGVCTVVKTTTPKKPNSALRKIARVRLTNGYEVTAYIPGVGHNLQEHSVVLIRGGRVKDLPGVRYHIVRGALDSAGVANRMQGRSKYGAKKPKQKK</sequence>
<evidence type="ECO:0000250" key="1"/>
<evidence type="ECO:0000255" key="2">
    <source>
        <dbReference type="HAMAP-Rule" id="MF_00403"/>
    </source>
</evidence>
<evidence type="ECO:0000256" key="3">
    <source>
        <dbReference type="SAM" id="MobiDB-lite"/>
    </source>
</evidence>
<evidence type="ECO:0000305" key="4"/>
<protein>
    <recommendedName>
        <fullName evidence="2">Small ribosomal subunit protein uS12</fullName>
    </recommendedName>
    <alternativeName>
        <fullName evidence="4">30S ribosomal protein S12</fullName>
    </alternativeName>
</protein>
<gene>
    <name evidence="2" type="primary">rpsL</name>
    <name type="ordered locus">CPE2410</name>
</gene>
<comment type="function">
    <text evidence="2">With S4 and S5 plays an important role in translational accuracy.</text>
</comment>
<comment type="function">
    <text evidence="2">Interacts with and stabilizes bases of the 16S rRNA that are involved in tRNA selection in the A site and with the mRNA backbone. Located at the interface of the 30S and 50S subunits, it traverses the body of the 30S subunit contacting proteins on the other side and probably holding the rRNA structure together. The combined cluster of proteins S8, S12 and S17 appears to hold together the shoulder and platform of the 30S subunit.</text>
</comment>
<comment type="subunit">
    <text evidence="2">Part of the 30S ribosomal subunit. Contacts proteins S8 and S17. May interact with IF1 in the 30S initiation complex.</text>
</comment>
<comment type="similarity">
    <text evidence="2">Belongs to the universal ribosomal protein uS12 family.</text>
</comment>
<feature type="chain" id="PRO_0000146210" description="Small ribosomal subunit protein uS12">
    <location>
        <begin position="1"/>
        <end position="126"/>
    </location>
</feature>
<feature type="region of interest" description="Disordered" evidence="3">
    <location>
        <begin position="1"/>
        <end position="23"/>
    </location>
</feature>
<feature type="modified residue" description="3-methylthioaspartic acid" evidence="1">
    <location>
        <position position="89"/>
    </location>
</feature>
<dbReference type="EMBL" id="BA000016">
    <property type="protein sequence ID" value="BAB82116.1"/>
    <property type="molecule type" value="Genomic_DNA"/>
</dbReference>
<dbReference type="RefSeq" id="WP_003452165.1">
    <property type="nucleotide sequence ID" value="NC_003366.1"/>
</dbReference>
<dbReference type="SMR" id="Q8XHR9"/>
<dbReference type="STRING" id="195102.gene:10491727"/>
<dbReference type="GeneID" id="93001004"/>
<dbReference type="KEGG" id="cpe:CPE2410"/>
<dbReference type="HOGENOM" id="CLU_104295_1_2_9"/>
<dbReference type="Proteomes" id="UP000000818">
    <property type="component" value="Chromosome"/>
</dbReference>
<dbReference type="GO" id="GO:0015935">
    <property type="term" value="C:small ribosomal subunit"/>
    <property type="evidence" value="ECO:0007669"/>
    <property type="project" value="InterPro"/>
</dbReference>
<dbReference type="GO" id="GO:0019843">
    <property type="term" value="F:rRNA binding"/>
    <property type="evidence" value="ECO:0007669"/>
    <property type="project" value="UniProtKB-UniRule"/>
</dbReference>
<dbReference type="GO" id="GO:0003735">
    <property type="term" value="F:structural constituent of ribosome"/>
    <property type="evidence" value="ECO:0007669"/>
    <property type="project" value="InterPro"/>
</dbReference>
<dbReference type="GO" id="GO:0000049">
    <property type="term" value="F:tRNA binding"/>
    <property type="evidence" value="ECO:0007669"/>
    <property type="project" value="UniProtKB-UniRule"/>
</dbReference>
<dbReference type="GO" id="GO:0006412">
    <property type="term" value="P:translation"/>
    <property type="evidence" value="ECO:0007669"/>
    <property type="project" value="UniProtKB-UniRule"/>
</dbReference>
<dbReference type="CDD" id="cd03368">
    <property type="entry name" value="Ribosomal_S12"/>
    <property type="match status" value="1"/>
</dbReference>
<dbReference type="FunFam" id="2.40.50.140:FF:000001">
    <property type="entry name" value="30S ribosomal protein S12"/>
    <property type="match status" value="1"/>
</dbReference>
<dbReference type="Gene3D" id="2.40.50.140">
    <property type="entry name" value="Nucleic acid-binding proteins"/>
    <property type="match status" value="1"/>
</dbReference>
<dbReference type="HAMAP" id="MF_00403_B">
    <property type="entry name" value="Ribosomal_uS12_B"/>
    <property type="match status" value="1"/>
</dbReference>
<dbReference type="InterPro" id="IPR012340">
    <property type="entry name" value="NA-bd_OB-fold"/>
</dbReference>
<dbReference type="InterPro" id="IPR006032">
    <property type="entry name" value="Ribosomal_uS12"/>
</dbReference>
<dbReference type="InterPro" id="IPR005679">
    <property type="entry name" value="Ribosomal_uS12_bac"/>
</dbReference>
<dbReference type="NCBIfam" id="TIGR00981">
    <property type="entry name" value="rpsL_bact"/>
    <property type="match status" value="1"/>
</dbReference>
<dbReference type="PANTHER" id="PTHR11652">
    <property type="entry name" value="30S RIBOSOMAL PROTEIN S12 FAMILY MEMBER"/>
    <property type="match status" value="1"/>
</dbReference>
<dbReference type="Pfam" id="PF00164">
    <property type="entry name" value="Ribosom_S12_S23"/>
    <property type="match status" value="1"/>
</dbReference>
<dbReference type="PIRSF" id="PIRSF002133">
    <property type="entry name" value="Ribosomal_S12/S23"/>
    <property type="match status" value="1"/>
</dbReference>
<dbReference type="PRINTS" id="PR01034">
    <property type="entry name" value="RIBOSOMALS12"/>
</dbReference>
<dbReference type="SUPFAM" id="SSF50249">
    <property type="entry name" value="Nucleic acid-binding proteins"/>
    <property type="match status" value="1"/>
</dbReference>
<dbReference type="PROSITE" id="PS00055">
    <property type="entry name" value="RIBOSOMAL_S12"/>
    <property type="match status" value="1"/>
</dbReference>
<organism>
    <name type="scientific">Clostridium perfringens (strain 13 / Type A)</name>
    <dbReference type="NCBI Taxonomy" id="195102"/>
    <lineage>
        <taxon>Bacteria</taxon>
        <taxon>Bacillati</taxon>
        <taxon>Bacillota</taxon>
        <taxon>Clostridia</taxon>
        <taxon>Eubacteriales</taxon>
        <taxon>Clostridiaceae</taxon>
        <taxon>Clostridium</taxon>
    </lineage>
</organism>
<reference key="1">
    <citation type="journal article" date="2002" name="Proc. Natl. Acad. Sci. U.S.A.">
        <title>Complete genome sequence of Clostridium perfringens, an anaerobic flesh-eater.</title>
        <authorList>
            <person name="Shimizu T."/>
            <person name="Ohtani K."/>
            <person name="Hirakawa H."/>
            <person name="Ohshima K."/>
            <person name="Yamashita A."/>
            <person name="Shiba T."/>
            <person name="Ogasawara N."/>
            <person name="Hattori M."/>
            <person name="Kuhara S."/>
            <person name="Hayashi H."/>
        </authorList>
    </citation>
    <scope>NUCLEOTIDE SEQUENCE [LARGE SCALE GENOMIC DNA]</scope>
    <source>
        <strain>13 / Type A</strain>
    </source>
</reference>
<keyword id="KW-0488">Methylation</keyword>
<keyword id="KW-1185">Reference proteome</keyword>
<keyword id="KW-0687">Ribonucleoprotein</keyword>
<keyword id="KW-0689">Ribosomal protein</keyword>
<keyword id="KW-0694">RNA-binding</keyword>
<keyword id="KW-0699">rRNA-binding</keyword>
<keyword id="KW-0820">tRNA-binding</keyword>
<accession>Q8XHR9</accession>